<keyword id="KW-0150">Chloroplast</keyword>
<keyword id="KW-0472">Membrane</keyword>
<keyword id="KW-0602">Photosynthesis</keyword>
<keyword id="KW-0604">Photosystem II</keyword>
<keyword id="KW-0934">Plastid</keyword>
<keyword id="KW-0674">Reaction center</keyword>
<keyword id="KW-0793">Thylakoid</keyword>
<keyword id="KW-0812">Transmembrane</keyword>
<keyword id="KW-1133">Transmembrane helix</keyword>
<dbReference type="EMBL" id="DQ886273">
    <property type="protein sequence ID" value="ABH88084.1"/>
    <property type="molecule type" value="Genomic_DNA"/>
</dbReference>
<dbReference type="EMBL" id="EU196765">
    <property type="protein sequence ID" value="ABW22784.1"/>
    <property type="molecule type" value="Genomic_DNA"/>
</dbReference>
<dbReference type="RefSeq" id="YP_001122804.1">
    <property type="nucleotide sequence ID" value="NC_009259.1"/>
</dbReference>
<dbReference type="SMR" id="A4GGA3"/>
<dbReference type="GeneID" id="4961796"/>
<dbReference type="KEGG" id="pvu:4961796"/>
<dbReference type="GO" id="GO:0009535">
    <property type="term" value="C:chloroplast thylakoid membrane"/>
    <property type="evidence" value="ECO:0007669"/>
    <property type="project" value="UniProtKB-SubCell"/>
</dbReference>
<dbReference type="GO" id="GO:0009523">
    <property type="term" value="C:photosystem II"/>
    <property type="evidence" value="ECO:0007669"/>
    <property type="project" value="UniProtKB-KW"/>
</dbReference>
<dbReference type="GO" id="GO:0019684">
    <property type="term" value="P:photosynthesis, light reaction"/>
    <property type="evidence" value="ECO:0007669"/>
    <property type="project" value="InterPro"/>
</dbReference>
<dbReference type="HAMAP" id="MF_00438">
    <property type="entry name" value="PSII_PsbM"/>
    <property type="match status" value="1"/>
</dbReference>
<dbReference type="InterPro" id="IPR007826">
    <property type="entry name" value="PSII_PsbM"/>
</dbReference>
<dbReference type="InterPro" id="IPR037269">
    <property type="entry name" value="PSII_PsbM_sf"/>
</dbReference>
<dbReference type="NCBIfam" id="TIGR03038">
    <property type="entry name" value="PS_II_psbM"/>
    <property type="match status" value="1"/>
</dbReference>
<dbReference type="PANTHER" id="PTHR35774">
    <property type="entry name" value="PHOTOSYSTEM II REACTION CENTER PROTEIN M"/>
    <property type="match status" value="1"/>
</dbReference>
<dbReference type="PANTHER" id="PTHR35774:SF1">
    <property type="entry name" value="PHOTOSYSTEM II REACTION CENTER PROTEIN M"/>
    <property type="match status" value="1"/>
</dbReference>
<dbReference type="Pfam" id="PF05151">
    <property type="entry name" value="PsbM"/>
    <property type="match status" value="1"/>
</dbReference>
<dbReference type="SUPFAM" id="SSF161033">
    <property type="entry name" value="Photosystem II reaction center protein M, PsbM"/>
    <property type="match status" value="1"/>
</dbReference>
<comment type="function">
    <text evidence="1">One of the components of the core complex of photosystem II (PSII). PSII is a light-driven water:plastoquinone oxidoreductase that uses light energy to abstract electrons from H(2)O, generating O(2) and a proton gradient subsequently used for ATP formation. It consists of a core antenna complex that captures photons, and an electron transfer chain that converts photonic excitation into a charge separation. This subunit is found at the monomer-monomer interface.</text>
</comment>
<comment type="subunit">
    <text evidence="1">PSII is composed of 1 copy each of membrane proteins PsbA, PsbB, PsbC, PsbD, PsbE, PsbF, PsbH, PsbI, PsbJ, PsbK, PsbL, PsbM, PsbT, PsbX, PsbY, PsbZ, Psb30/Ycf12, at least 3 peripheral proteins of the oxygen-evolving complex and a large number of cofactors. It forms dimeric complexes.</text>
</comment>
<comment type="subcellular location">
    <subcellularLocation>
        <location evidence="1">Plastid</location>
        <location evidence="1">Chloroplast thylakoid membrane</location>
        <topology evidence="1">Single-pass membrane protein</topology>
    </subcellularLocation>
</comment>
<comment type="similarity">
    <text evidence="1">Belongs to the PsbM family.</text>
</comment>
<geneLocation type="chloroplast"/>
<reference key="1">
    <citation type="journal article" date="2007" name="BMC Genomics">
        <title>Rapid evolutionary change of common bean (Phaseolus vulgaris L) plastome, and the genomic diversification of legume chloroplasts.</title>
        <authorList>
            <person name="Guo X."/>
            <person name="Castillo-Ramirez S."/>
            <person name="Gonzalez V."/>
            <person name="Bustos P."/>
            <person name="Fernandez-Vazquez J.L."/>
            <person name="Santamaria R.I."/>
            <person name="Arellano J."/>
            <person name="Cevallos M.A."/>
            <person name="Davila G."/>
        </authorList>
    </citation>
    <scope>NUCLEOTIDE SEQUENCE [LARGE SCALE GENOMIC DNA]</scope>
    <source>
        <strain>cv. Negro Jamapa</strain>
    </source>
</reference>
<reference key="2">
    <citation type="submission" date="2007-10" db="EMBL/GenBank/DDBJ databases">
        <title>Complete nucleotide sequence of the plastid genome of the common bean, Phaseolus vulgaris.</title>
        <authorList>
            <person name="Moore M.J."/>
            <person name="Triplett E.W."/>
            <person name="Broughton W.J."/>
            <person name="Soltis P.S."/>
            <person name="Soltis D.E."/>
        </authorList>
    </citation>
    <scope>NUCLEOTIDE SEQUENCE [LARGE SCALE GENOMIC DNA]</scope>
</reference>
<sequence length="34" mass="3756">MEVNILAFIATALFILVPTAFLLIIYVKTVSKSD</sequence>
<evidence type="ECO:0000255" key="1">
    <source>
        <dbReference type="HAMAP-Rule" id="MF_00438"/>
    </source>
</evidence>
<proteinExistence type="inferred from homology"/>
<organism>
    <name type="scientific">Phaseolus vulgaris</name>
    <name type="common">Kidney bean</name>
    <name type="synonym">French bean</name>
    <dbReference type="NCBI Taxonomy" id="3885"/>
    <lineage>
        <taxon>Eukaryota</taxon>
        <taxon>Viridiplantae</taxon>
        <taxon>Streptophyta</taxon>
        <taxon>Embryophyta</taxon>
        <taxon>Tracheophyta</taxon>
        <taxon>Spermatophyta</taxon>
        <taxon>Magnoliopsida</taxon>
        <taxon>eudicotyledons</taxon>
        <taxon>Gunneridae</taxon>
        <taxon>Pentapetalae</taxon>
        <taxon>rosids</taxon>
        <taxon>fabids</taxon>
        <taxon>Fabales</taxon>
        <taxon>Fabaceae</taxon>
        <taxon>Papilionoideae</taxon>
        <taxon>50 kb inversion clade</taxon>
        <taxon>NPAAA clade</taxon>
        <taxon>indigoferoid/millettioid clade</taxon>
        <taxon>Phaseoleae</taxon>
        <taxon>Phaseolus</taxon>
    </lineage>
</organism>
<protein>
    <recommendedName>
        <fullName evidence="1">Photosystem II reaction center protein M</fullName>
        <shortName evidence="1">PSII-M</shortName>
    </recommendedName>
</protein>
<name>PSBM_PHAVU</name>
<feature type="chain" id="PRO_0000325746" description="Photosystem II reaction center protein M">
    <location>
        <begin position="1"/>
        <end position="34"/>
    </location>
</feature>
<feature type="transmembrane region" description="Helical" evidence="1">
    <location>
        <begin position="5"/>
        <end position="25"/>
    </location>
</feature>
<gene>
    <name evidence="1" type="primary">psbM</name>
</gene>
<accession>A4GGA3</accession>